<accession>A7H0Y2</accession>
<protein>
    <recommendedName>
        <fullName evidence="1">Aspartate 1-decarboxylase</fullName>
        <ecNumber evidence="1">4.1.1.11</ecNumber>
    </recommendedName>
    <alternativeName>
        <fullName evidence="1">Aspartate alpha-decarboxylase</fullName>
    </alternativeName>
    <component>
        <recommendedName>
            <fullName evidence="1">Aspartate 1-decarboxylase beta chain</fullName>
        </recommendedName>
    </component>
    <component>
        <recommendedName>
            <fullName evidence="1">Aspartate 1-decarboxylase alpha chain</fullName>
        </recommendedName>
    </component>
</protein>
<organism>
    <name type="scientific">Campylobacter curvus (strain 525.92)</name>
    <dbReference type="NCBI Taxonomy" id="360105"/>
    <lineage>
        <taxon>Bacteria</taxon>
        <taxon>Pseudomonadati</taxon>
        <taxon>Campylobacterota</taxon>
        <taxon>Epsilonproteobacteria</taxon>
        <taxon>Campylobacterales</taxon>
        <taxon>Campylobacteraceae</taxon>
        <taxon>Campylobacter</taxon>
    </lineage>
</organism>
<sequence>MRVEILSSKIHRATVTDANLNYVGSITIDEELMRAANLLENQKVEILDVNNGERFATYVIKGKKGEICLNGAAARKVCIGDIVIIVAYASMKFKKAKKFSPTIVHVNAKNEMIKK</sequence>
<feature type="chain" id="PRO_1000026167" description="Aspartate 1-decarboxylase beta chain" evidence="1">
    <location>
        <begin position="1"/>
        <end position="24"/>
    </location>
</feature>
<feature type="chain" id="PRO_0000316058" description="Aspartate 1-decarboxylase alpha chain" evidence="1">
    <location>
        <begin position="25"/>
        <end position="115"/>
    </location>
</feature>
<feature type="active site" description="Schiff-base intermediate with substrate; via pyruvic acid" evidence="1">
    <location>
        <position position="25"/>
    </location>
</feature>
<feature type="active site" description="Proton donor" evidence="1">
    <location>
        <position position="58"/>
    </location>
</feature>
<feature type="binding site" evidence="1">
    <location>
        <position position="57"/>
    </location>
    <ligand>
        <name>substrate</name>
    </ligand>
</feature>
<feature type="binding site" evidence="1">
    <location>
        <begin position="71"/>
        <end position="73"/>
    </location>
    <ligand>
        <name>substrate</name>
    </ligand>
</feature>
<feature type="modified residue" description="Pyruvic acid (Ser)" evidence="1">
    <location>
        <position position="25"/>
    </location>
</feature>
<evidence type="ECO:0000255" key="1">
    <source>
        <dbReference type="HAMAP-Rule" id="MF_00446"/>
    </source>
</evidence>
<keyword id="KW-0068">Autocatalytic cleavage</keyword>
<keyword id="KW-0963">Cytoplasm</keyword>
<keyword id="KW-0210">Decarboxylase</keyword>
<keyword id="KW-0456">Lyase</keyword>
<keyword id="KW-0566">Pantothenate biosynthesis</keyword>
<keyword id="KW-0670">Pyruvate</keyword>
<keyword id="KW-1185">Reference proteome</keyword>
<keyword id="KW-0704">Schiff base</keyword>
<keyword id="KW-0865">Zymogen</keyword>
<name>PAND_CAMC5</name>
<dbReference type="EC" id="4.1.1.11" evidence="1"/>
<dbReference type="EMBL" id="CP000767">
    <property type="protein sequence ID" value="EAU00337.1"/>
    <property type="molecule type" value="Genomic_DNA"/>
</dbReference>
<dbReference type="RefSeq" id="WP_009649873.1">
    <property type="nucleotide sequence ID" value="NC_009715.2"/>
</dbReference>
<dbReference type="SMR" id="A7H0Y2"/>
<dbReference type="STRING" id="360105.CCV52592_0074"/>
<dbReference type="GeneID" id="61003066"/>
<dbReference type="KEGG" id="ccv:CCV52592_0074"/>
<dbReference type="HOGENOM" id="CLU_115305_2_0_7"/>
<dbReference type="OrthoDB" id="9803983at2"/>
<dbReference type="UniPathway" id="UPA00028">
    <property type="reaction ID" value="UER00002"/>
</dbReference>
<dbReference type="Proteomes" id="UP000006380">
    <property type="component" value="Chromosome"/>
</dbReference>
<dbReference type="GO" id="GO:0005829">
    <property type="term" value="C:cytosol"/>
    <property type="evidence" value="ECO:0007669"/>
    <property type="project" value="TreeGrafter"/>
</dbReference>
<dbReference type="GO" id="GO:0004068">
    <property type="term" value="F:aspartate 1-decarboxylase activity"/>
    <property type="evidence" value="ECO:0007669"/>
    <property type="project" value="UniProtKB-UniRule"/>
</dbReference>
<dbReference type="GO" id="GO:0006523">
    <property type="term" value="P:alanine biosynthetic process"/>
    <property type="evidence" value="ECO:0007669"/>
    <property type="project" value="InterPro"/>
</dbReference>
<dbReference type="GO" id="GO:0015940">
    <property type="term" value="P:pantothenate biosynthetic process"/>
    <property type="evidence" value="ECO:0007669"/>
    <property type="project" value="UniProtKB-UniRule"/>
</dbReference>
<dbReference type="CDD" id="cd06919">
    <property type="entry name" value="Asp_decarbox"/>
    <property type="match status" value="1"/>
</dbReference>
<dbReference type="Gene3D" id="2.40.40.20">
    <property type="match status" value="1"/>
</dbReference>
<dbReference type="HAMAP" id="MF_00446">
    <property type="entry name" value="PanD"/>
    <property type="match status" value="1"/>
</dbReference>
<dbReference type="InterPro" id="IPR009010">
    <property type="entry name" value="Asp_de-COase-like_dom_sf"/>
</dbReference>
<dbReference type="InterPro" id="IPR003190">
    <property type="entry name" value="Asp_decarbox"/>
</dbReference>
<dbReference type="NCBIfam" id="TIGR00223">
    <property type="entry name" value="panD"/>
    <property type="match status" value="1"/>
</dbReference>
<dbReference type="PANTHER" id="PTHR21012">
    <property type="entry name" value="ASPARTATE 1-DECARBOXYLASE"/>
    <property type="match status" value="1"/>
</dbReference>
<dbReference type="PANTHER" id="PTHR21012:SF0">
    <property type="entry name" value="ASPARTATE 1-DECARBOXYLASE"/>
    <property type="match status" value="1"/>
</dbReference>
<dbReference type="Pfam" id="PF02261">
    <property type="entry name" value="Asp_decarbox"/>
    <property type="match status" value="1"/>
</dbReference>
<dbReference type="PIRSF" id="PIRSF006246">
    <property type="entry name" value="Asp_decarbox"/>
    <property type="match status" value="1"/>
</dbReference>
<dbReference type="SUPFAM" id="SSF50692">
    <property type="entry name" value="ADC-like"/>
    <property type="match status" value="1"/>
</dbReference>
<proteinExistence type="inferred from homology"/>
<reference key="1">
    <citation type="submission" date="2007-07" db="EMBL/GenBank/DDBJ databases">
        <title>Genome sequence of Campylobacter curvus 525.92 isolated from human feces.</title>
        <authorList>
            <person name="Fouts D.E."/>
            <person name="Mongodin E.F."/>
            <person name="Puiu D."/>
            <person name="Sebastian Y."/>
            <person name="Miller W.G."/>
            <person name="Mandrell R.E."/>
            <person name="Lastovica A.J."/>
            <person name="Nelson K.E."/>
        </authorList>
    </citation>
    <scope>NUCLEOTIDE SEQUENCE [LARGE SCALE GENOMIC DNA]</scope>
    <source>
        <strain>525.92</strain>
    </source>
</reference>
<gene>
    <name evidence="1" type="primary">panD</name>
    <name type="ordered locus">Ccur92_18200</name>
    <name type="ORF">CCV52592_0074</name>
</gene>
<comment type="function">
    <text evidence="1">Catalyzes the pyruvoyl-dependent decarboxylation of aspartate to produce beta-alanine.</text>
</comment>
<comment type="catalytic activity">
    <reaction evidence="1">
        <text>L-aspartate + H(+) = beta-alanine + CO2</text>
        <dbReference type="Rhea" id="RHEA:19497"/>
        <dbReference type="ChEBI" id="CHEBI:15378"/>
        <dbReference type="ChEBI" id="CHEBI:16526"/>
        <dbReference type="ChEBI" id="CHEBI:29991"/>
        <dbReference type="ChEBI" id="CHEBI:57966"/>
        <dbReference type="EC" id="4.1.1.11"/>
    </reaction>
</comment>
<comment type="cofactor">
    <cofactor evidence="1">
        <name>pyruvate</name>
        <dbReference type="ChEBI" id="CHEBI:15361"/>
    </cofactor>
    <text evidence="1">Binds 1 pyruvoyl group covalently per subunit.</text>
</comment>
<comment type="pathway">
    <text evidence="1">Cofactor biosynthesis; (R)-pantothenate biosynthesis; beta-alanine from L-aspartate: step 1/1.</text>
</comment>
<comment type="subunit">
    <text evidence="1">Heterooctamer of four alpha and four beta subunits.</text>
</comment>
<comment type="subcellular location">
    <subcellularLocation>
        <location evidence="1">Cytoplasm</location>
    </subcellularLocation>
</comment>
<comment type="PTM">
    <text evidence="1">Is synthesized initially as an inactive proenzyme, which is activated by self-cleavage at a specific serine bond to produce a beta-subunit with a hydroxyl group at its C-terminus and an alpha-subunit with a pyruvoyl group at its N-terminus.</text>
</comment>
<comment type="similarity">
    <text evidence="1">Belongs to the PanD family.</text>
</comment>